<name>PILN_PSEAE</name>
<keyword id="KW-0002">3D-structure</keyword>
<keyword id="KW-0997">Cell inner membrane</keyword>
<keyword id="KW-1003">Cell membrane</keyword>
<keyword id="KW-0472">Membrane</keyword>
<keyword id="KW-1185">Reference proteome</keyword>
<keyword id="KW-0812">Transmembrane</keyword>
<keyword id="KW-1133">Transmembrane helix</keyword>
<evidence type="ECO:0000255" key="1"/>
<evidence type="ECO:0000269" key="2">
    <source>
    </source>
</evidence>
<evidence type="ECO:0000269" key="3">
    <source>
    </source>
</evidence>
<evidence type="ECO:0000269" key="4">
    <source>
    </source>
</evidence>
<evidence type="ECO:0000269" key="5">
    <source>
    </source>
</evidence>
<evidence type="ECO:0000269" key="6">
    <source>
    </source>
</evidence>
<evidence type="ECO:0000303" key="7">
    <source>
    </source>
</evidence>
<evidence type="ECO:0007744" key="8">
    <source>
        <dbReference type="PDB" id="5EOU"/>
    </source>
</evidence>
<gene>
    <name type="primary">pilN</name>
    <name type="ordered locus">PA5043</name>
</gene>
<comment type="function">
    <text evidence="2 3 5">Inner membrane component of the type IV (T4S) secretion system that plays a role in surface and host cell adhesion, colonization, biofilm maturation, virulence, and twitching, a form of surface-associated motility. PilN/PilO heterodimers form the foundation of the inner-membrane PilM/PilN/PilO/PilP complex which plays an essential role in the assembly of a functional T4 pilus (PubMed:19857645, PubMed:19857646). In turn, associates with PilM and facilitates PilM functionally relevant structural changes (PubMed:27022027).</text>
</comment>
<comment type="subunit">
    <text evidence="2 3 4 5 6">Homodimer (PubMed:27474743). Interacts with PilO (PubMed:19857645, PubMed:19857646, PubMed:22053789, PubMed:27474743). Interacts with PilP (via N-terminus) (PubMed:22053789). Interacts (via N-terminus) with PilM; this interaction modulates PilM ATP binding site (PubMed:19857646, PubMed:27022027).</text>
</comment>
<comment type="subcellular location">
    <subcellularLocation>
        <location evidence="2">Cell inner membrane</location>
        <topology evidence="1">Single-pass type II membrane protein</topology>
    </subcellularLocation>
</comment>
<comment type="disruption phenotype">
    <text evidence="2">Deletion mutants lack surface pili.</text>
</comment>
<feature type="chain" id="PRO_0000450557" description="Type IV pilus inner membrane component PilN">
    <location>
        <begin position="1"/>
        <end position="198"/>
    </location>
</feature>
<feature type="transmembrane region" description="Helical" evidence="1">
    <location>
        <begin position="19"/>
        <end position="39"/>
    </location>
</feature>
<proteinExistence type="evidence at protein level"/>
<reference key="1">
    <citation type="journal article" date="2000" name="Nature">
        <title>Complete genome sequence of Pseudomonas aeruginosa PAO1, an opportunistic pathogen.</title>
        <authorList>
            <person name="Stover C.K."/>
            <person name="Pham X.-Q.T."/>
            <person name="Erwin A.L."/>
            <person name="Mizoguchi S.D."/>
            <person name="Warrener P."/>
            <person name="Hickey M.J."/>
            <person name="Brinkman F.S.L."/>
            <person name="Hufnagle W.O."/>
            <person name="Kowalik D.J."/>
            <person name="Lagrou M."/>
            <person name="Garber R.L."/>
            <person name="Goltry L."/>
            <person name="Tolentino E."/>
            <person name="Westbrock-Wadman S."/>
            <person name="Yuan Y."/>
            <person name="Brody L.L."/>
            <person name="Coulter S.N."/>
            <person name="Folger K.R."/>
            <person name="Kas A."/>
            <person name="Larbig K."/>
            <person name="Lim R.M."/>
            <person name="Smith K.A."/>
            <person name="Spencer D.H."/>
            <person name="Wong G.K.-S."/>
            <person name="Wu Z."/>
            <person name="Paulsen I.T."/>
            <person name="Reizer J."/>
            <person name="Saier M.H. Jr."/>
            <person name="Hancock R.E.W."/>
            <person name="Lory S."/>
            <person name="Olson M.V."/>
        </authorList>
    </citation>
    <scope>NUCLEOTIDE SEQUENCE [LARGE SCALE GENOMIC DNA]</scope>
    <source>
        <strain>ATCC 15692 / DSM 22644 / CIP 104116 / JCM 14847 / LMG 12228 / 1C / PRS 101 / PAO1</strain>
    </source>
</reference>
<reference key="2">
    <citation type="journal article" date="2009" name="J. Mol. Biol.">
        <title>PilM/N/O/P proteins form an inner membrane complex that affects the stability of the Pseudomonas aeruginosa type IV pilus secretin.</title>
        <authorList>
            <person name="Ayers M."/>
            <person name="Sampaleanu L.M."/>
            <person name="Tammam S."/>
            <person name="Koo J."/>
            <person name="Harvey H."/>
            <person name="Howell P.L."/>
            <person name="Burrows L.L."/>
        </authorList>
    </citation>
    <scope>FUNCTION</scope>
    <scope>SUBCELLULAR LOCATION</scope>
    <scope>INTERACTION WITH PILM; PILO AND PILP</scope>
    <scope>DISRUPTION PHENOTYPE</scope>
</reference>
<reference key="3">
    <citation type="journal article" date="2009" name="J. Mol. Biol.">
        <title>Periplasmic domains of Pseudomonas aeruginosa PilN and PilO form a stable heterodimeric complex.</title>
        <authorList>
            <person name="Sampaleanu L.M."/>
            <person name="Bonanno J.B."/>
            <person name="Ayers M."/>
            <person name="Koo J."/>
            <person name="Tammam S."/>
            <person name="Burley S.K."/>
            <person name="Almo S.C."/>
            <person name="Burrows L.L."/>
            <person name="Howell P.L."/>
        </authorList>
    </citation>
    <scope>FUNCTION</scope>
    <scope>INTERACTION WITH PILO AND PILM</scope>
</reference>
<reference key="4">
    <citation type="journal article" date="2011" name="Mol. Microbiol.">
        <title>Characterization of the PilN, PilO and PilP type IVa pilus subcomplex.</title>
        <authorList>
            <person name="Tammam S."/>
            <person name="Sampaleanu L.M."/>
            <person name="Koo J."/>
            <person name="Sundaram P."/>
            <person name="Ayers M."/>
            <person name="Chong P.A."/>
            <person name="Forman-Kay J.D."/>
            <person name="Burrows L.L."/>
            <person name="Howell P.L."/>
        </authorList>
    </citation>
    <scope>INTERACTION WITH PILP AND PILO</scope>
</reference>
<reference key="5">
    <citation type="journal article" date="2016" name="J. Biol. Chem.">
        <title>Type IV Pilus Alignment Subcomplex Proteins PilN and PilO Form Homo- and Heterodimers in Vivo.</title>
        <authorList>
            <person name="Leighton T.L."/>
            <person name="Yong D.H."/>
            <person name="Howell P.L."/>
            <person name="Burrows L.L."/>
        </authorList>
    </citation>
    <scope>INTERACTION WITH PILO</scope>
    <scope>SUBUNIT</scope>
</reference>
<reference evidence="8" key="6">
    <citation type="journal article" date="2016" name="J. Biol. Chem.">
        <title>PilN Binding Modulates the Structure and Binding Partners of the Pseudomonas aeruginosa Type IVa Pilus Protein PilM.</title>
        <authorList>
            <person name="McCallum M."/>
            <person name="Tammam S."/>
            <person name="Little D.J."/>
            <person name="Robinson H."/>
            <person name="Koo J."/>
            <person name="Shah M."/>
            <person name="Calmettes C."/>
            <person name="Moraes T.F."/>
            <person name="Burrows L.L."/>
            <person name="Howell P.L."/>
        </authorList>
    </citation>
    <scope>X-RAY CRYSTALLOGRAPHY (2.40 ANGSTROMS) OF 1-12</scope>
    <scope>FUNCTION</scope>
    <scope>INTERACTION WITH PILM</scope>
</reference>
<accession>G3XD30</accession>
<protein>
    <recommendedName>
        <fullName evidence="7">Type IV pilus inner membrane component PilN</fullName>
    </recommendedName>
</protein>
<dbReference type="EMBL" id="AE004091">
    <property type="protein sequence ID" value="AAG08428.1"/>
    <property type="molecule type" value="Genomic_DNA"/>
</dbReference>
<dbReference type="PIR" id="S77727">
    <property type="entry name" value="S77727"/>
</dbReference>
<dbReference type="RefSeq" id="NP_253730.1">
    <property type="nucleotide sequence ID" value="NC_002516.2"/>
</dbReference>
<dbReference type="RefSeq" id="WP_003095839.1">
    <property type="nucleotide sequence ID" value="NZ_QZGE01000002.1"/>
</dbReference>
<dbReference type="PDB" id="5EOU">
    <property type="method" value="X-ray"/>
    <property type="resolution" value="2.40 A"/>
    <property type="chains" value="A/B=1-12"/>
</dbReference>
<dbReference type="PDBsum" id="5EOU"/>
<dbReference type="SMR" id="G3XD30"/>
<dbReference type="STRING" id="208964.PA5043"/>
<dbReference type="PaxDb" id="208964-PA5043"/>
<dbReference type="GeneID" id="881025"/>
<dbReference type="KEGG" id="pae:PA5043"/>
<dbReference type="PATRIC" id="fig|208964.12.peg.5287"/>
<dbReference type="PseudoCAP" id="PA5043"/>
<dbReference type="HOGENOM" id="CLU_081304_1_2_6"/>
<dbReference type="InParanoid" id="G3XD30"/>
<dbReference type="OrthoDB" id="5296173at2"/>
<dbReference type="PhylomeDB" id="G3XD30"/>
<dbReference type="Proteomes" id="UP000002438">
    <property type="component" value="Chromosome"/>
</dbReference>
<dbReference type="GO" id="GO:0005886">
    <property type="term" value="C:plasma membrane"/>
    <property type="evidence" value="ECO:0007669"/>
    <property type="project" value="UniProtKB-SubCell"/>
</dbReference>
<dbReference type="GO" id="GO:0044096">
    <property type="term" value="C:type IV pilus"/>
    <property type="evidence" value="ECO:0000315"/>
    <property type="project" value="PseudoCAP"/>
</dbReference>
<dbReference type="GO" id="GO:0043683">
    <property type="term" value="P:type IV pilus assembly"/>
    <property type="evidence" value="ECO:0000315"/>
    <property type="project" value="PseudoCAP"/>
</dbReference>
<dbReference type="GO" id="GO:0043107">
    <property type="term" value="P:type IV pilus-dependent motility"/>
    <property type="evidence" value="ECO:0000315"/>
    <property type="project" value="PseudoCAP"/>
</dbReference>
<dbReference type="InterPro" id="IPR052534">
    <property type="entry name" value="Extracell_DNA_Util/SecSys_Comp"/>
</dbReference>
<dbReference type="InterPro" id="IPR007813">
    <property type="entry name" value="PilN"/>
</dbReference>
<dbReference type="PANTHER" id="PTHR40278">
    <property type="entry name" value="DNA UTILIZATION PROTEIN HOFN"/>
    <property type="match status" value="1"/>
</dbReference>
<dbReference type="PANTHER" id="PTHR40278:SF2">
    <property type="entry name" value="TYPE IV PILUS INNER MEMBRANE COMPONENT PILN"/>
    <property type="match status" value="1"/>
</dbReference>
<dbReference type="Pfam" id="PF05137">
    <property type="entry name" value="PilN"/>
    <property type="match status" value="1"/>
</dbReference>
<organism>
    <name type="scientific">Pseudomonas aeruginosa (strain ATCC 15692 / DSM 22644 / CIP 104116 / JCM 14847 / LMG 12228 / 1C / PRS 101 / PAO1)</name>
    <dbReference type="NCBI Taxonomy" id="208964"/>
    <lineage>
        <taxon>Bacteria</taxon>
        <taxon>Pseudomonadati</taxon>
        <taxon>Pseudomonadota</taxon>
        <taxon>Gammaproteobacteria</taxon>
        <taxon>Pseudomonadales</taxon>
        <taxon>Pseudomonadaceae</taxon>
        <taxon>Pseudomonas</taxon>
    </lineage>
</organism>
<sequence>MARINLLPWREELREQRKQQFLVILGGVLVASAALVFLGDQYFTAAIENQNARNDFLRKEIVVLDARIKEISELKSRRQQLLERMKIIQDLQGNRPIIGRVFDQLVRTLPDGVYFTDLKMTGKNIAIAGAAESNNRVSNLMRNMDASEWLTAPTLNEVKAVTQGAVDQANVFQLTVQQTQPGEEDAKAKHGVAQGAKK</sequence>